<protein>
    <recommendedName>
        <fullName>Neopullulanase 1</fullName>
        <ecNumber evidence="4">3.2.1.135</ecNumber>
    </recommendedName>
    <alternativeName>
        <fullName>Alpha-amylase I</fullName>
    </alternativeName>
    <alternativeName>
        <fullName>TVA I</fullName>
    </alternativeName>
</protein>
<keyword id="KW-0002">3D-structure</keyword>
<keyword id="KW-0106">Calcium</keyword>
<keyword id="KW-0119">Carbohydrate metabolism</keyword>
<keyword id="KW-0868">Chloride</keyword>
<keyword id="KW-0326">Glycosidase</keyword>
<keyword id="KW-0378">Hydrolase</keyword>
<keyword id="KW-0479">Metal-binding</keyword>
<keyword id="KW-0964">Secreted</keyword>
<keyword id="KW-0732">Signal</keyword>
<comment type="function">
    <text evidence="4">Endohydrolysis of 1,4-alpha-glucosidic linkages in pullulan to form panose. Also hydrolyzes cyclodextrins.</text>
</comment>
<comment type="catalytic activity">
    <reaction evidence="4">
        <text>Hydrolysis of pullulan to panose (6-alpha-D-glucosylmaltose).</text>
        <dbReference type="EC" id="3.2.1.135"/>
    </reaction>
</comment>
<comment type="cofactor">
    <cofactor evidence="3">
        <name>Ca(2+)</name>
        <dbReference type="ChEBI" id="CHEBI:29108"/>
    </cofactor>
    <text evidence="3">Binds 3 Ca(2+) ions per subunit.</text>
</comment>
<comment type="subcellular location">
    <subcellularLocation>
        <location>Secreted</location>
    </subcellularLocation>
</comment>
<comment type="similarity">
    <text evidence="5">Belongs to the glycosyl hydrolase 13 family.</text>
</comment>
<organism>
    <name type="scientific">Thermoactinomyces vulgaris</name>
    <dbReference type="NCBI Taxonomy" id="2026"/>
    <lineage>
        <taxon>Bacteria</taxon>
        <taxon>Bacillati</taxon>
        <taxon>Bacillota</taxon>
        <taxon>Bacilli</taxon>
        <taxon>Bacillales</taxon>
        <taxon>Thermoactinomycetaceae</taxon>
        <taxon>Thermoactinomyces</taxon>
    </lineage>
</organism>
<reference key="1">
    <citation type="journal article" date="1995" name="Biochim. Biophys. Acta">
        <title>Comparison of primary structures and substrate specificities of two pullulan-hydrolyzing alpha-amylases, TVA I and TVA II, from Thermoactinomyces vulgaris R-47.</title>
        <authorList>
            <person name="Tonozuka T."/>
            <person name="Mogi S."/>
            <person name="Shimura Y."/>
            <person name="Ibuka A."/>
            <person name="Sakai H."/>
            <person name="Matsuzawa H."/>
            <person name="Sakano Y."/>
            <person name="Ohta T."/>
        </authorList>
    </citation>
    <scope>NUCLEOTIDE SEQUENCE [GENOMIC DNA]</scope>
    <scope>CHARACTERIZATION</scope>
    <scope>CATALYTIC ACTIVITY</scope>
    <scope>FUNCTION</scope>
    <source>
        <strain>R-47</strain>
    </source>
</reference>
<reference key="2">
    <citation type="journal article" date="2002" name="J. Mol. Biol.">
        <title>Crystal structures and structural comparison of Thermoactinomyces vulgaris R-47 alpha-amylase 1 (TVAI) at 1.6 A resolution and alpha-amylase 2 (TVAII) at 2.3 A resolution.</title>
        <authorList>
            <person name="Kamitori S."/>
            <person name="Abe A."/>
            <person name="Ohtaki A."/>
            <person name="Kaji A."/>
            <person name="Tonozuka T."/>
            <person name="Sakano Y."/>
        </authorList>
    </citation>
    <scope>X-RAY CRYSTALLOGRAPHY (1.60 ANGSTROMS) OF 30-666 IN COMPLEX WITH CALCIUM</scope>
    <scope>COFACTOR</scope>
    <source>
        <strain>R-47</strain>
    </source>
</reference>
<sequence>MIKLLKPMSLSILLVFILSFSFPFPTAKAAANDNNVEWNGLFHDQGPLFDNAPEPTSTQSVTLKLRTFKGDITSANIKYWDTADNAFHWVPMVWDSNDPTGTFDYWKGTIPASPSIKYYRFQINDGTSTAWYNGNGPSSTEPNADDFYIIPNFKTPDWLKNGVMYQIFPDRFYNGDSSNDVQTGSYTYNGTPTEKKAWGSSVYADPGYDNSLVFFGGDLAGIDQKLGYIKKTLGANILYLNPIFKAPTNHKYDTQDYMAVDPAFGDNSTLQTLINDIHSTANGPKGYLILDGVFNHTGDSHPWFDKYNNFSSQGAYESQSSPWYNYYTFYTWPDSYASFLGFNSLPKLNYGNSGSAVRGVIYNNSNSVAKTYLNPPYSVDGWRLDAAQYVDANGNNGSDVTNHQIWSEFRNAVKGVNSNAAIIGEYWGNANPWTAQGNQWDAATNFDGFTQPVSEWITGKDYQNNSASISTTQFDSWLRGTRANYPTNVQQSMMNFLSNHDITRFATRSGGDLWKTYLALIFQMTYVGTPTIYYGDEYGMQGGADPDNRRSFDWSQATPSNSAVALTQKLITIRNQYPALRTGSFMTLITDDTNKIYSYGRFDNVNRIAVVLNNDSVSHTVNVPVWQLSMPNGSTVTDKITGHSYTVQNGMVTVAVDGHYGAVLAQ</sequence>
<gene>
    <name type="primary">tvaI</name>
</gene>
<evidence type="ECO:0000250" key="1"/>
<evidence type="ECO:0000250" key="2">
    <source>
        <dbReference type="UniProtKB" id="P38940"/>
    </source>
</evidence>
<evidence type="ECO:0000269" key="3">
    <source>
    </source>
</evidence>
<evidence type="ECO:0000269" key="4">
    <source>
    </source>
</evidence>
<evidence type="ECO:0000305" key="5"/>
<evidence type="ECO:0007744" key="6">
    <source>
        <dbReference type="PDB" id="1JI1"/>
    </source>
</evidence>
<evidence type="ECO:0007829" key="7">
    <source>
        <dbReference type="PDB" id="1IZK"/>
    </source>
</evidence>
<evidence type="ECO:0007829" key="8">
    <source>
        <dbReference type="PDB" id="1UH2"/>
    </source>
</evidence>
<evidence type="ECO:0007829" key="9">
    <source>
        <dbReference type="PDB" id="5Z0T"/>
    </source>
</evidence>
<evidence type="ECO:0007829" key="10">
    <source>
        <dbReference type="PDB" id="5Z0U"/>
    </source>
</evidence>
<dbReference type="EC" id="3.2.1.135" evidence="4"/>
<dbReference type="EMBL" id="D13177">
    <property type="protein sequence ID" value="BAA02471.1"/>
    <property type="molecule type" value="Genomic_DNA"/>
</dbReference>
<dbReference type="PDB" id="1IZJ">
    <property type="method" value="X-ray"/>
    <property type="resolution" value="2.20 A"/>
    <property type="chains" value="A=30-666"/>
</dbReference>
<dbReference type="PDB" id="1IZK">
    <property type="method" value="X-ray"/>
    <property type="resolution" value="2.20 A"/>
    <property type="chains" value="A=30-666"/>
</dbReference>
<dbReference type="PDB" id="1JI1">
    <property type="method" value="X-ray"/>
    <property type="resolution" value="1.60 A"/>
    <property type="chains" value="A/B=30-666"/>
</dbReference>
<dbReference type="PDB" id="1UH2">
    <property type="method" value="X-ray"/>
    <property type="resolution" value="2.00 A"/>
    <property type="chains" value="A=30-666"/>
</dbReference>
<dbReference type="PDB" id="1UH3">
    <property type="method" value="X-ray"/>
    <property type="resolution" value="2.60 A"/>
    <property type="chains" value="A=30-666"/>
</dbReference>
<dbReference type="PDB" id="1UH4">
    <property type="method" value="X-ray"/>
    <property type="resolution" value="1.80 A"/>
    <property type="chains" value="A=30-666"/>
</dbReference>
<dbReference type="PDB" id="2D0F">
    <property type="method" value="X-ray"/>
    <property type="resolution" value="2.08 A"/>
    <property type="chains" value="A=30-666"/>
</dbReference>
<dbReference type="PDB" id="2D0G">
    <property type="method" value="X-ray"/>
    <property type="resolution" value="2.60 A"/>
    <property type="chains" value="A=30-666"/>
</dbReference>
<dbReference type="PDB" id="2D0H">
    <property type="method" value="X-ray"/>
    <property type="resolution" value="2.10 A"/>
    <property type="chains" value="A=30-666"/>
</dbReference>
<dbReference type="PDB" id="5Z0T">
    <property type="method" value="X-ray"/>
    <property type="resolution" value="1.50 A"/>
    <property type="chains" value="A/B=30-666"/>
</dbReference>
<dbReference type="PDB" id="5Z0U">
    <property type="method" value="X-ray"/>
    <property type="resolution" value="1.37 A"/>
    <property type="chains" value="A=30-666"/>
</dbReference>
<dbReference type="PDBsum" id="1IZJ"/>
<dbReference type="PDBsum" id="1IZK"/>
<dbReference type="PDBsum" id="1JI1"/>
<dbReference type="PDBsum" id="1UH2"/>
<dbReference type="PDBsum" id="1UH3"/>
<dbReference type="PDBsum" id="1UH4"/>
<dbReference type="PDBsum" id="2D0F"/>
<dbReference type="PDBsum" id="2D0G"/>
<dbReference type="PDBsum" id="2D0H"/>
<dbReference type="PDBsum" id="5Z0T"/>
<dbReference type="PDBsum" id="5Z0U"/>
<dbReference type="SMR" id="Q60053"/>
<dbReference type="DrugBank" id="DB01841">
    <property type="generic name" value="4,6-Dideoxyglucose"/>
</dbReference>
<dbReference type="DrugBank" id="DB02120">
    <property type="generic name" value="6-Amino-4-Hydroxymethyl-Cyclohex-4-Ene-1,2,3-Triol"/>
</dbReference>
<dbReference type="DrugBank" id="DB02379">
    <property type="generic name" value="Beta-D-Glucose"/>
</dbReference>
<dbReference type="CAZy" id="CBM34">
    <property type="family name" value="Carbohydrate-Binding Module Family 34"/>
</dbReference>
<dbReference type="CAZy" id="GH13">
    <property type="family name" value="Glycoside Hydrolase Family 13"/>
</dbReference>
<dbReference type="EvolutionaryTrace" id="Q60053"/>
<dbReference type="GO" id="GO:0005576">
    <property type="term" value="C:extracellular region"/>
    <property type="evidence" value="ECO:0007669"/>
    <property type="project" value="UniProtKB-SubCell"/>
</dbReference>
<dbReference type="GO" id="GO:0046872">
    <property type="term" value="F:metal ion binding"/>
    <property type="evidence" value="ECO:0007669"/>
    <property type="project" value="UniProtKB-KW"/>
</dbReference>
<dbReference type="GO" id="GO:0031216">
    <property type="term" value="F:neopullulanase activity"/>
    <property type="evidence" value="ECO:0007669"/>
    <property type="project" value="UniProtKB-EC"/>
</dbReference>
<dbReference type="GO" id="GO:0005975">
    <property type="term" value="P:carbohydrate metabolic process"/>
    <property type="evidence" value="ECO:0007669"/>
    <property type="project" value="InterPro"/>
</dbReference>
<dbReference type="CDD" id="cd11338">
    <property type="entry name" value="AmyAc_CMD"/>
    <property type="match status" value="1"/>
</dbReference>
<dbReference type="CDD" id="cd02857">
    <property type="entry name" value="E_set_CDase_PDE_N"/>
    <property type="match status" value="1"/>
</dbReference>
<dbReference type="Gene3D" id="3.20.20.80">
    <property type="entry name" value="Glycosidases"/>
    <property type="match status" value="1"/>
</dbReference>
<dbReference type="Gene3D" id="2.60.40.1180">
    <property type="entry name" value="Golgi alpha-mannosidase II"/>
    <property type="match status" value="1"/>
</dbReference>
<dbReference type="Gene3D" id="2.60.40.10">
    <property type="entry name" value="Immunoglobulins"/>
    <property type="match status" value="1"/>
</dbReference>
<dbReference type="InterPro" id="IPR006047">
    <property type="entry name" value="Glyco_hydro_13_cat_dom"/>
</dbReference>
<dbReference type="InterPro" id="IPR004185">
    <property type="entry name" value="Glyco_hydro_13_lg-like_dom"/>
</dbReference>
<dbReference type="InterPro" id="IPR013780">
    <property type="entry name" value="Glyco_hydro_b"/>
</dbReference>
<dbReference type="InterPro" id="IPR017853">
    <property type="entry name" value="Glycoside_hydrolase_SF"/>
</dbReference>
<dbReference type="InterPro" id="IPR013783">
    <property type="entry name" value="Ig-like_fold"/>
</dbReference>
<dbReference type="InterPro" id="IPR014756">
    <property type="entry name" value="Ig_E-set"/>
</dbReference>
<dbReference type="PANTHER" id="PTHR10357">
    <property type="entry name" value="ALPHA-AMYLASE FAMILY MEMBER"/>
    <property type="match status" value="1"/>
</dbReference>
<dbReference type="PANTHER" id="PTHR10357:SF210">
    <property type="entry name" value="MALTODEXTRIN GLUCOSIDASE"/>
    <property type="match status" value="1"/>
</dbReference>
<dbReference type="Pfam" id="PF00128">
    <property type="entry name" value="Alpha-amylase"/>
    <property type="match status" value="1"/>
</dbReference>
<dbReference type="Pfam" id="PF02903">
    <property type="entry name" value="Alpha-amylase_N"/>
    <property type="match status" value="1"/>
</dbReference>
<dbReference type="SMART" id="SM00642">
    <property type="entry name" value="Aamy"/>
    <property type="match status" value="1"/>
</dbReference>
<dbReference type="SUPFAM" id="SSF51445">
    <property type="entry name" value="(Trans)glycosidases"/>
    <property type="match status" value="1"/>
</dbReference>
<dbReference type="SUPFAM" id="SSF81296">
    <property type="entry name" value="E set domains"/>
    <property type="match status" value="1"/>
</dbReference>
<dbReference type="SUPFAM" id="SSF51011">
    <property type="entry name" value="Glycosyl hydrolase domain"/>
    <property type="match status" value="1"/>
</dbReference>
<proteinExistence type="evidence at protein level"/>
<feature type="signal peptide">
    <location>
        <begin position="1"/>
        <end position="29"/>
    </location>
</feature>
<feature type="chain" id="PRO_0000001445" description="Neopullulanase 1">
    <location>
        <begin position="30"/>
        <end position="666"/>
    </location>
</feature>
<feature type="active site" description="Nucleophile" evidence="2">
    <location>
        <position position="385"/>
    </location>
</feature>
<feature type="active site" description="Proton donor" evidence="2">
    <location>
        <position position="425"/>
    </location>
</feature>
<feature type="binding site" evidence="3 6">
    <location>
        <position position="31"/>
    </location>
    <ligand>
        <name>Ca(2+)</name>
        <dbReference type="ChEBI" id="CHEBI:29108"/>
        <label>1</label>
    </ligand>
</feature>
<feature type="binding site" evidence="3 6">
    <location>
        <position position="33"/>
    </location>
    <ligand>
        <name>Ca(2+)</name>
        <dbReference type="ChEBI" id="CHEBI:29108"/>
        <label>1</label>
    </ligand>
</feature>
<feature type="binding site" evidence="3 6">
    <location>
        <position position="35"/>
    </location>
    <ligand>
        <name>Ca(2+)</name>
        <dbReference type="ChEBI" id="CHEBI:29108"/>
        <label>1</label>
    </ligand>
</feature>
<feature type="binding site" evidence="3 6">
    <location>
        <position position="71"/>
    </location>
    <ligand>
        <name>Ca(2+)</name>
        <dbReference type="ChEBI" id="CHEBI:29108"/>
        <label>1</label>
    </ligand>
</feature>
<feature type="binding site" evidence="3 6">
    <location>
        <position position="125"/>
    </location>
    <ligand>
        <name>Ca(2+)</name>
        <dbReference type="ChEBI" id="CHEBI:29108"/>
        <label>1</label>
    </ligand>
</feature>
<feature type="binding site" evidence="3 6">
    <location>
        <position position="174"/>
    </location>
    <ligand>
        <name>Ca(2+)</name>
        <dbReference type="ChEBI" id="CHEBI:29108"/>
        <label>2</label>
    </ligand>
</feature>
<feature type="binding site" evidence="3 6">
    <location>
        <position position="176"/>
    </location>
    <ligand>
        <name>Ca(2+)</name>
        <dbReference type="ChEBI" id="CHEBI:29108"/>
        <label>2</label>
    </ligand>
</feature>
<feature type="binding site" evidence="3 6">
    <location>
        <position position="179"/>
    </location>
    <ligand>
        <name>Ca(2+)</name>
        <dbReference type="ChEBI" id="CHEBI:29108"/>
        <label>2</label>
    </ligand>
</feature>
<feature type="binding site" evidence="3 6">
    <location>
        <position position="180"/>
    </location>
    <ligand>
        <name>Ca(2+)</name>
        <dbReference type="ChEBI" id="CHEBI:29108"/>
        <label>2</label>
    </ligand>
</feature>
<feature type="binding site" evidence="3 6">
    <location>
        <position position="216"/>
    </location>
    <ligand>
        <name>Ca(2+)</name>
        <dbReference type="ChEBI" id="CHEBI:29108"/>
        <label>2</label>
    </ligand>
</feature>
<feature type="binding site" evidence="3 6">
    <location>
        <position position="218"/>
    </location>
    <ligand>
        <name>Ca(2+)</name>
        <dbReference type="ChEBI" id="CHEBI:29108"/>
        <label>2</label>
    </ligand>
</feature>
<feature type="binding site" evidence="2">
    <location>
        <position position="296"/>
    </location>
    <ligand>
        <name>substrate</name>
    </ligand>
</feature>
<feature type="binding site" evidence="3 6">
    <location>
        <position position="305"/>
    </location>
    <ligand>
        <name>Ca(2+)</name>
        <dbReference type="ChEBI" id="CHEBI:29108"/>
        <label>3</label>
    </ligand>
</feature>
<feature type="binding site" evidence="3 6">
    <location>
        <position position="309"/>
    </location>
    <ligand>
        <name>Ca(2+)</name>
        <dbReference type="ChEBI" id="CHEBI:29108"/>
        <label>3</label>
    </ligand>
</feature>
<feature type="binding site" evidence="3 6">
    <location>
        <position position="310"/>
    </location>
    <ligand>
        <name>Ca(2+)</name>
        <dbReference type="ChEBI" id="CHEBI:29108"/>
        <label>3</label>
    </ligand>
</feature>
<feature type="binding site" evidence="3 6">
    <location>
        <position position="312"/>
    </location>
    <ligand>
        <name>Ca(2+)</name>
        <dbReference type="ChEBI" id="CHEBI:29108"/>
        <label>3</label>
    </ligand>
</feature>
<feature type="binding site" evidence="3 6">
    <location>
        <position position="317"/>
    </location>
    <ligand>
        <name>Ca(2+)</name>
        <dbReference type="ChEBI" id="CHEBI:29108"/>
        <label>3</label>
    </ligand>
</feature>
<feature type="binding site" evidence="2">
    <location>
        <position position="383"/>
    </location>
    <ligand>
        <name>substrate</name>
    </ligand>
</feature>
<feature type="binding site" evidence="2">
    <location>
        <begin position="500"/>
        <end position="501"/>
    </location>
    <ligand>
        <name>substrate</name>
    </ligand>
</feature>
<feature type="binding site" evidence="2">
    <location>
        <position position="545"/>
    </location>
    <ligand>
        <name>substrate</name>
    </ligand>
</feature>
<feature type="binding site" evidence="2">
    <location>
        <position position="549"/>
    </location>
    <ligand>
        <name>substrate</name>
    </ligand>
</feature>
<feature type="site" description="Transition state stabilizer" evidence="1">
    <location>
        <position position="501"/>
    </location>
</feature>
<feature type="strand" evidence="10">
    <location>
        <begin position="32"/>
        <end position="34"/>
    </location>
</feature>
<feature type="helix" evidence="10">
    <location>
        <begin position="38"/>
        <end position="40"/>
    </location>
</feature>
<feature type="turn" evidence="10">
    <location>
        <begin position="47"/>
        <end position="49"/>
    </location>
</feature>
<feature type="strand" evidence="10">
    <location>
        <begin position="61"/>
        <end position="68"/>
    </location>
</feature>
<feature type="strand" evidence="10">
    <location>
        <begin position="73"/>
        <end position="81"/>
    </location>
</feature>
<feature type="turn" evidence="10">
    <location>
        <begin position="82"/>
        <end position="85"/>
    </location>
</feature>
<feature type="strand" evidence="10">
    <location>
        <begin position="86"/>
        <end position="91"/>
    </location>
</feature>
<feature type="strand" evidence="10">
    <location>
        <begin position="93"/>
        <end position="97"/>
    </location>
</feature>
<feature type="strand" evidence="10">
    <location>
        <begin position="101"/>
        <end position="110"/>
    </location>
</feature>
<feature type="strand" evidence="10">
    <location>
        <begin position="117"/>
        <end position="125"/>
    </location>
</feature>
<feature type="strand" evidence="10">
    <location>
        <begin position="128"/>
        <end position="133"/>
    </location>
</feature>
<feature type="strand" evidence="10">
    <location>
        <begin position="136"/>
        <end position="140"/>
    </location>
</feature>
<feature type="strand" evidence="10">
    <location>
        <begin position="147"/>
        <end position="149"/>
    </location>
</feature>
<feature type="helix" evidence="10">
    <location>
        <begin position="157"/>
        <end position="161"/>
    </location>
</feature>
<feature type="strand" evidence="10">
    <location>
        <begin position="164"/>
        <end position="167"/>
    </location>
</feature>
<feature type="helix" evidence="10">
    <location>
        <begin position="169"/>
        <end position="172"/>
    </location>
</feature>
<feature type="helix" evidence="10">
    <location>
        <begin position="177"/>
        <end position="179"/>
    </location>
</feature>
<feature type="strand" evidence="7">
    <location>
        <begin position="187"/>
        <end position="190"/>
    </location>
</feature>
<feature type="helix" evidence="10">
    <location>
        <begin position="210"/>
        <end position="212"/>
    </location>
</feature>
<feature type="helix" evidence="10">
    <location>
        <begin position="219"/>
        <end position="224"/>
    </location>
</feature>
<feature type="helix" evidence="10">
    <location>
        <begin position="226"/>
        <end position="230"/>
    </location>
</feature>
<feature type="turn" evidence="10">
    <location>
        <begin position="231"/>
        <end position="233"/>
    </location>
</feature>
<feature type="strand" evidence="10">
    <location>
        <begin position="237"/>
        <end position="241"/>
    </location>
</feature>
<feature type="strand" evidence="10">
    <location>
        <begin position="247"/>
        <end position="250"/>
    </location>
</feature>
<feature type="strand" evidence="10">
    <location>
        <begin position="255"/>
        <end position="260"/>
    </location>
</feature>
<feature type="turn" evidence="10">
    <location>
        <begin position="262"/>
        <end position="264"/>
    </location>
</feature>
<feature type="helix" evidence="10">
    <location>
        <begin position="267"/>
        <end position="278"/>
    </location>
</feature>
<feature type="strand" evidence="10">
    <location>
        <begin position="280"/>
        <end position="284"/>
    </location>
</feature>
<feature type="strand" evidence="10">
    <location>
        <begin position="287"/>
        <end position="292"/>
    </location>
</feature>
<feature type="turn" evidence="10">
    <location>
        <begin position="302"/>
        <end position="304"/>
    </location>
</feature>
<feature type="strand" evidence="10">
    <location>
        <begin position="310"/>
        <end position="312"/>
    </location>
</feature>
<feature type="turn" evidence="10">
    <location>
        <begin position="315"/>
        <end position="317"/>
    </location>
</feature>
<feature type="helix" evidence="10">
    <location>
        <begin position="324"/>
        <end position="326"/>
    </location>
</feature>
<feature type="strand" evidence="10">
    <location>
        <begin position="329"/>
        <end position="331"/>
    </location>
</feature>
<feature type="turn" evidence="10">
    <location>
        <begin position="332"/>
        <end position="334"/>
    </location>
</feature>
<feature type="helix" evidence="9">
    <location>
        <begin position="339"/>
        <end position="341"/>
    </location>
</feature>
<feature type="strand" evidence="10">
    <location>
        <begin position="345"/>
        <end position="347"/>
    </location>
</feature>
<feature type="helix" evidence="10">
    <location>
        <begin position="356"/>
        <end position="361"/>
    </location>
</feature>
<feature type="helix" evidence="10">
    <location>
        <begin position="368"/>
        <end position="373"/>
    </location>
</feature>
<feature type="turn" evidence="10">
    <location>
        <begin position="375"/>
        <end position="377"/>
    </location>
</feature>
<feature type="strand" evidence="10">
    <location>
        <begin position="381"/>
        <end position="384"/>
    </location>
</feature>
<feature type="helix" evidence="10">
    <location>
        <begin position="387"/>
        <end position="389"/>
    </location>
</feature>
<feature type="strand" evidence="8">
    <location>
        <begin position="397"/>
        <end position="399"/>
    </location>
</feature>
<feature type="helix" evidence="10">
    <location>
        <begin position="403"/>
        <end position="416"/>
    </location>
</feature>
<feature type="strand" evidence="10">
    <location>
        <begin position="421"/>
        <end position="424"/>
    </location>
</feature>
<feature type="helix" evidence="10">
    <location>
        <begin position="431"/>
        <end position="433"/>
    </location>
</feature>
<feature type="turn" evidence="10">
    <location>
        <begin position="434"/>
        <end position="436"/>
    </location>
</feature>
<feature type="strand" evidence="10">
    <location>
        <begin position="437"/>
        <end position="439"/>
    </location>
</feature>
<feature type="strand" evidence="10">
    <location>
        <begin position="441"/>
        <end position="444"/>
    </location>
</feature>
<feature type="turn" evidence="10">
    <location>
        <begin position="446"/>
        <end position="449"/>
    </location>
</feature>
<feature type="helix" evidence="10">
    <location>
        <begin position="450"/>
        <end position="458"/>
    </location>
</feature>
<feature type="helix" evidence="10">
    <location>
        <begin position="471"/>
        <end position="482"/>
    </location>
</feature>
<feature type="helix" evidence="10">
    <location>
        <begin position="487"/>
        <end position="492"/>
    </location>
</feature>
<feature type="strand" evidence="10">
    <location>
        <begin position="494"/>
        <end position="497"/>
    </location>
</feature>
<feature type="helix" evidence="10">
    <location>
        <begin position="505"/>
        <end position="508"/>
    </location>
</feature>
<feature type="turn" evidence="10">
    <location>
        <begin position="509"/>
        <end position="511"/>
    </location>
</feature>
<feature type="helix" evidence="10">
    <location>
        <begin position="513"/>
        <end position="525"/>
    </location>
</feature>
<feature type="strand" evidence="10">
    <location>
        <begin position="526"/>
        <end position="533"/>
    </location>
</feature>
<feature type="helix" evidence="10">
    <location>
        <begin position="536"/>
        <end position="538"/>
    </location>
</feature>
<feature type="turn" evidence="10">
    <location>
        <begin position="545"/>
        <end position="548"/>
    </location>
</feature>
<feature type="helix" evidence="10">
    <location>
        <begin position="554"/>
        <end position="556"/>
    </location>
</feature>
<feature type="helix" evidence="10">
    <location>
        <begin position="562"/>
        <end position="576"/>
    </location>
</feature>
<feature type="helix" evidence="10">
    <location>
        <begin position="578"/>
        <end position="582"/>
    </location>
</feature>
<feature type="strand" evidence="10">
    <location>
        <begin position="583"/>
        <end position="591"/>
    </location>
</feature>
<feature type="turn" evidence="10">
    <location>
        <begin position="592"/>
        <end position="595"/>
    </location>
</feature>
<feature type="strand" evidence="10">
    <location>
        <begin position="596"/>
        <end position="602"/>
    </location>
</feature>
<feature type="strand" evidence="10">
    <location>
        <begin position="607"/>
        <end position="613"/>
    </location>
</feature>
<feature type="strand" evidence="10">
    <location>
        <begin position="615"/>
        <end position="617"/>
    </location>
</feature>
<feature type="strand" evidence="10">
    <location>
        <begin position="619"/>
        <end position="623"/>
    </location>
</feature>
<feature type="helix" evidence="10">
    <location>
        <begin position="625"/>
        <end position="628"/>
    </location>
</feature>
<feature type="strand" evidence="10">
    <location>
        <begin position="635"/>
        <end position="638"/>
    </location>
</feature>
<feature type="turn" evidence="10">
    <location>
        <begin position="639"/>
        <end position="641"/>
    </location>
</feature>
<feature type="strand" evidence="10">
    <location>
        <begin position="644"/>
        <end position="646"/>
    </location>
</feature>
<feature type="strand" evidence="10">
    <location>
        <begin position="651"/>
        <end position="656"/>
    </location>
</feature>
<feature type="strand" evidence="10">
    <location>
        <begin position="660"/>
        <end position="666"/>
    </location>
</feature>
<name>NEPU1_THEVU</name>
<accession>Q60053</accession>